<sequence length="367" mass="40440">MNKYKNIKRRKSNRIYVGNVPIGDGAPISVQSMTNTQTTNIEETIKQIIKLKKVGVDIVRISVPTLEAAESFKIIKLNVDVPLIADIHFDYRLAIKSIKYGADCLRINPGNIGNKRRILDIVNCAKDKNIPIRIGVNAGSLENDLLKKYKSPIPEALVESAIRHIEYLDSLNFNQFKVSVKTSDVFSAIEANEILAKKTVQPIHIGITESGALRNGIVKSSIGITSLLLSGIGDTLRISLAADPVEEVKVGYDILKTLGIRFRGVNFIACPTCSRQEFNVIDVVNQLEKNLEDLSTPMNVSIIGCIVNGIGEAKVSTLGIVGGSKTSALYKDGIRQKNKLKNQEIIKELEIKIRKKAKSLDKLKKII</sequence>
<evidence type="ECO:0000255" key="1">
    <source>
        <dbReference type="HAMAP-Rule" id="MF_00159"/>
    </source>
</evidence>
<protein>
    <recommendedName>
        <fullName evidence="1">4-hydroxy-3-methylbut-2-en-1-yl diphosphate synthase (flavodoxin)</fullName>
        <ecNumber evidence="1">1.17.7.3</ecNumber>
    </recommendedName>
    <alternativeName>
        <fullName evidence="1">1-hydroxy-2-methyl-2-(E)-butenyl 4-diphosphate synthase</fullName>
    </alternativeName>
</protein>
<organism>
    <name type="scientific">Buchnera aphidicola subsp. Schizaphis graminum (strain Sg)</name>
    <dbReference type="NCBI Taxonomy" id="198804"/>
    <lineage>
        <taxon>Bacteria</taxon>
        <taxon>Pseudomonadati</taxon>
        <taxon>Pseudomonadota</taxon>
        <taxon>Gammaproteobacteria</taxon>
        <taxon>Enterobacterales</taxon>
        <taxon>Erwiniaceae</taxon>
        <taxon>Buchnera</taxon>
    </lineage>
</organism>
<keyword id="KW-0004">4Fe-4S</keyword>
<keyword id="KW-0408">Iron</keyword>
<keyword id="KW-0411">Iron-sulfur</keyword>
<keyword id="KW-0414">Isoprene biosynthesis</keyword>
<keyword id="KW-0479">Metal-binding</keyword>
<keyword id="KW-0560">Oxidoreductase</keyword>
<feature type="chain" id="PRO_0000190550" description="4-hydroxy-3-methylbut-2-en-1-yl diphosphate synthase (flavodoxin)">
    <location>
        <begin position="1"/>
        <end position="367"/>
    </location>
</feature>
<feature type="binding site" evidence="1">
    <location>
        <position position="270"/>
    </location>
    <ligand>
        <name>[4Fe-4S] cluster</name>
        <dbReference type="ChEBI" id="CHEBI:49883"/>
    </ligand>
</feature>
<feature type="binding site" evidence="1">
    <location>
        <position position="273"/>
    </location>
    <ligand>
        <name>[4Fe-4S] cluster</name>
        <dbReference type="ChEBI" id="CHEBI:49883"/>
    </ligand>
</feature>
<feature type="binding site" evidence="1">
    <location>
        <position position="305"/>
    </location>
    <ligand>
        <name>[4Fe-4S] cluster</name>
        <dbReference type="ChEBI" id="CHEBI:49883"/>
    </ligand>
</feature>
<feature type="binding site" evidence="1">
    <location>
        <position position="312"/>
    </location>
    <ligand>
        <name>[4Fe-4S] cluster</name>
        <dbReference type="ChEBI" id="CHEBI:49883"/>
    </ligand>
</feature>
<comment type="function">
    <text evidence="1">Converts 2C-methyl-D-erythritol 2,4-cyclodiphosphate (ME-2,4cPP) into 1-hydroxy-2-methyl-2-(E)-butenyl 4-diphosphate.</text>
</comment>
<comment type="catalytic activity">
    <reaction evidence="1">
        <text>(2E)-4-hydroxy-3-methylbut-2-enyl diphosphate + oxidized [flavodoxin] + H2O + 2 H(+) = 2-C-methyl-D-erythritol 2,4-cyclic diphosphate + reduced [flavodoxin]</text>
        <dbReference type="Rhea" id="RHEA:43604"/>
        <dbReference type="Rhea" id="RHEA-COMP:10622"/>
        <dbReference type="Rhea" id="RHEA-COMP:10623"/>
        <dbReference type="ChEBI" id="CHEBI:15377"/>
        <dbReference type="ChEBI" id="CHEBI:15378"/>
        <dbReference type="ChEBI" id="CHEBI:57618"/>
        <dbReference type="ChEBI" id="CHEBI:58210"/>
        <dbReference type="ChEBI" id="CHEBI:58483"/>
        <dbReference type="ChEBI" id="CHEBI:128753"/>
        <dbReference type="EC" id="1.17.7.3"/>
    </reaction>
</comment>
<comment type="cofactor">
    <cofactor evidence="1">
        <name>[4Fe-4S] cluster</name>
        <dbReference type="ChEBI" id="CHEBI:49883"/>
    </cofactor>
    <text evidence="1">Binds 1 [4Fe-4S] cluster.</text>
</comment>
<comment type="pathway">
    <text evidence="1">Isoprenoid biosynthesis; isopentenyl diphosphate biosynthesis via DXP pathway; isopentenyl diphosphate from 1-deoxy-D-xylulose 5-phosphate: step 5/6.</text>
</comment>
<comment type="similarity">
    <text evidence="1">Belongs to the IspG family.</text>
</comment>
<accession>Q8K9P4</accession>
<proteinExistence type="inferred from homology"/>
<dbReference type="EC" id="1.17.7.3" evidence="1"/>
<dbReference type="EMBL" id="AE013218">
    <property type="protein sequence ID" value="AAM67834.1"/>
    <property type="molecule type" value="Genomic_DNA"/>
</dbReference>
<dbReference type="RefSeq" id="WP_011053801.1">
    <property type="nucleotide sequence ID" value="NC_004061.1"/>
</dbReference>
<dbReference type="SMR" id="Q8K9P4"/>
<dbReference type="STRING" id="198804.BUsg_276"/>
<dbReference type="GeneID" id="93003746"/>
<dbReference type="KEGG" id="bas:BUsg_276"/>
<dbReference type="eggNOG" id="COG0821">
    <property type="taxonomic scope" value="Bacteria"/>
</dbReference>
<dbReference type="HOGENOM" id="CLU_042258_0_0_6"/>
<dbReference type="UniPathway" id="UPA00056">
    <property type="reaction ID" value="UER00096"/>
</dbReference>
<dbReference type="Proteomes" id="UP000000416">
    <property type="component" value="Chromosome"/>
</dbReference>
<dbReference type="GO" id="GO:0051539">
    <property type="term" value="F:4 iron, 4 sulfur cluster binding"/>
    <property type="evidence" value="ECO:0007669"/>
    <property type="project" value="UniProtKB-UniRule"/>
</dbReference>
<dbReference type="GO" id="GO:0046429">
    <property type="term" value="F:4-hydroxy-3-methylbut-2-en-1-yl diphosphate synthase activity (ferredoxin)"/>
    <property type="evidence" value="ECO:0007669"/>
    <property type="project" value="UniProtKB-UniRule"/>
</dbReference>
<dbReference type="GO" id="GO:0141197">
    <property type="term" value="F:4-hydroxy-3-methylbut-2-enyl-diphosphate synthase activity (flavodoxin)"/>
    <property type="evidence" value="ECO:0007669"/>
    <property type="project" value="UniProtKB-EC"/>
</dbReference>
<dbReference type="GO" id="GO:0005506">
    <property type="term" value="F:iron ion binding"/>
    <property type="evidence" value="ECO:0007669"/>
    <property type="project" value="InterPro"/>
</dbReference>
<dbReference type="GO" id="GO:0019288">
    <property type="term" value="P:isopentenyl diphosphate biosynthetic process, methylerythritol 4-phosphate pathway"/>
    <property type="evidence" value="ECO:0007669"/>
    <property type="project" value="UniProtKB-UniRule"/>
</dbReference>
<dbReference type="GO" id="GO:0016114">
    <property type="term" value="P:terpenoid biosynthetic process"/>
    <property type="evidence" value="ECO:0007669"/>
    <property type="project" value="InterPro"/>
</dbReference>
<dbReference type="FunFam" id="3.20.20.20:FF:000001">
    <property type="entry name" value="4-hydroxy-3-methylbut-2-en-1-yl diphosphate synthase (flavodoxin)"/>
    <property type="match status" value="1"/>
</dbReference>
<dbReference type="Gene3D" id="3.20.20.20">
    <property type="entry name" value="Dihydropteroate synthase-like"/>
    <property type="match status" value="1"/>
</dbReference>
<dbReference type="Gene3D" id="3.30.413.10">
    <property type="entry name" value="Sulfite Reductase Hemoprotein, domain 1"/>
    <property type="match status" value="1"/>
</dbReference>
<dbReference type="HAMAP" id="MF_00159">
    <property type="entry name" value="IspG"/>
    <property type="match status" value="1"/>
</dbReference>
<dbReference type="InterPro" id="IPR011005">
    <property type="entry name" value="Dihydropteroate_synth-like_sf"/>
</dbReference>
<dbReference type="InterPro" id="IPR016425">
    <property type="entry name" value="IspG_bac"/>
</dbReference>
<dbReference type="InterPro" id="IPR004588">
    <property type="entry name" value="IspG_bac-typ"/>
</dbReference>
<dbReference type="InterPro" id="IPR045854">
    <property type="entry name" value="NO2/SO3_Rdtase_4Fe4S_sf"/>
</dbReference>
<dbReference type="NCBIfam" id="TIGR00612">
    <property type="entry name" value="ispG_gcpE"/>
    <property type="match status" value="1"/>
</dbReference>
<dbReference type="NCBIfam" id="NF001540">
    <property type="entry name" value="PRK00366.1"/>
    <property type="match status" value="1"/>
</dbReference>
<dbReference type="PANTHER" id="PTHR30454">
    <property type="entry name" value="4-HYDROXY-3-METHYLBUT-2-EN-1-YL DIPHOSPHATE SYNTHASE"/>
    <property type="match status" value="1"/>
</dbReference>
<dbReference type="PANTHER" id="PTHR30454:SF0">
    <property type="entry name" value="4-HYDROXY-3-METHYLBUT-2-EN-1-YL DIPHOSPHATE SYNTHASE (FERREDOXIN), CHLOROPLASTIC"/>
    <property type="match status" value="1"/>
</dbReference>
<dbReference type="Pfam" id="PF04551">
    <property type="entry name" value="GcpE"/>
    <property type="match status" value="1"/>
</dbReference>
<dbReference type="PIRSF" id="PIRSF004640">
    <property type="entry name" value="IspG"/>
    <property type="match status" value="1"/>
</dbReference>
<dbReference type="SUPFAM" id="SSF51717">
    <property type="entry name" value="Dihydropteroate synthetase-like"/>
    <property type="match status" value="1"/>
</dbReference>
<dbReference type="SUPFAM" id="SSF56014">
    <property type="entry name" value="Nitrite and sulphite reductase 4Fe-4S domain-like"/>
    <property type="match status" value="1"/>
</dbReference>
<gene>
    <name evidence="1" type="primary">ispG</name>
    <name type="synonym">gcpE</name>
    <name type="ordered locus">BUsg_276</name>
</gene>
<reference key="1">
    <citation type="journal article" date="2002" name="Science">
        <title>50 million years of genomic stasis in endosymbiotic bacteria.</title>
        <authorList>
            <person name="Tamas I."/>
            <person name="Klasson L."/>
            <person name="Canbaeck B."/>
            <person name="Naeslund A.K."/>
            <person name="Eriksson A.-S."/>
            <person name="Wernegreen J.J."/>
            <person name="Sandstroem J.P."/>
            <person name="Moran N.A."/>
            <person name="Andersson S.G.E."/>
        </authorList>
    </citation>
    <scope>NUCLEOTIDE SEQUENCE [LARGE SCALE GENOMIC DNA]</scope>
    <source>
        <strain>Sg</strain>
    </source>
</reference>
<name>ISPG_BUCAP</name>